<name>HUTU_BACC0</name>
<protein>
    <recommendedName>
        <fullName evidence="1">Urocanate hydratase</fullName>
        <shortName evidence="1">Urocanase</shortName>
        <ecNumber evidence="1">4.2.1.49</ecNumber>
    </recommendedName>
    <alternativeName>
        <fullName evidence="1">Imidazolonepropionate hydrolase</fullName>
    </alternativeName>
</protein>
<proteinExistence type="inferred from homology"/>
<accession>B7JI79</accession>
<evidence type="ECO:0000255" key="1">
    <source>
        <dbReference type="HAMAP-Rule" id="MF_00577"/>
    </source>
</evidence>
<keyword id="KW-0963">Cytoplasm</keyword>
<keyword id="KW-0369">Histidine metabolism</keyword>
<keyword id="KW-0456">Lyase</keyword>
<keyword id="KW-0520">NAD</keyword>
<feature type="chain" id="PRO_1000129557" description="Urocanate hydratase">
    <location>
        <begin position="1"/>
        <end position="552"/>
    </location>
</feature>
<feature type="active site" evidence="1">
    <location>
        <position position="407"/>
    </location>
</feature>
<feature type="binding site" evidence="1">
    <location>
        <begin position="49"/>
        <end position="50"/>
    </location>
    <ligand>
        <name>NAD(+)</name>
        <dbReference type="ChEBI" id="CHEBI:57540"/>
    </ligand>
</feature>
<feature type="binding site" evidence="1">
    <location>
        <position position="127"/>
    </location>
    <ligand>
        <name>NAD(+)</name>
        <dbReference type="ChEBI" id="CHEBI:57540"/>
    </ligand>
</feature>
<feature type="binding site" evidence="1">
    <location>
        <begin position="173"/>
        <end position="175"/>
    </location>
    <ligand>
        <name>NAD(+)</name>
        <dbReference type="ChEBI" id="CHEBI:57540"/>
    </ligand>
</feature>
<feature type="binding site" evidence="1">
    <location>
        <position position="193"/>
    </location>
    <ligand>
        <name>NAD(+)</name>
        <dbReference type="ChEBI" id="CHEBI:57540"/>
    </ligand>
</feature>
<feature type="binding site" evidence="1">
    <location>
        <begin position="239"/>
        <end position="240"/>
    </location>
    <ligand>
        <name>NAD(+)</name>
        <dbReference type="ChEBI" id="CHEBI:57540"/>
    </ligand>
</feature>
<feature type="binding site" evidence="1">
    <location>
        <begin position="260"/>
        <end position="264"/>
    </location>
    <ligand>
        <name>NAD(+)</name>
        <dbReference type="ChEBI" id="CHEBI:57540"/>
    </ligand>
</feature>
<feature type="binding site" evidence="1">
    <location>
        <begin position="270"/>
        <end position="271"/>
    </location>
    <ligand>
        <name>NAD(+)</name>
        <dbReference type="ChEBI" id="CHEBI:57540"/>
    </ligand>
</feature>
<feature type="binding site" evidence="1">
    <location>
        <position position="319"/>
    </location>
    <ligand>
        <name>NAD(+)</name>
        <dbReference type="ChEBI" id="CHEBI:57540"/>
    </ligand>
</feature>
<feature type="binding site" evidence="1">
    <location>
        <position position="489"/>
    </location>
    <ligand>
        <name>NAD(+)</name>
        <dbReference type="ChEBI" id="CHEBI:57540"/>
    </ligand>
</feature>
<dbReference type="EC" id="4.2.1.49" evidence="1"/>
<dbReference type="EMBL" id="CP001283">
    <property type="protein sequence ID" value="ACK91057.1"/>
    <property type="molecule type" value="Genomic_DNA"/>
</dbReference>
<dbReference type="RefSeq" id="WP_000416714.1">
    <property type="nucleotide sequence ID" value="NC_011773.1"/>
</dbReference>
<dbReference type="SMR" id="B7JI79"/>
<dbReference type="KEGG" id="bcu:BCAH820_3661"/>
<dbReference type="HOGENOM" id="CLU_018868_0_1_9"/>
<dbReference type="UniPathway" id="UPA00379">
    <property type="reaction ID" value="UER00550"/>
</dbReference>
<dbReference type="Proteomes" id="UP000001363">
    <property type="component" value="Chromosome"/>
</dbReference>
<dbReference type="GO" id="GO:0005737">
    <property type="term" value="C:cytoplasm"/>
    <property type="evidence" value="ECO:0007669"/>
    <property type="project" value="UniProtKB-SubCell"/>
</dbReference>
<dbReference type="GO" id="GO:0016153">
    <property type="term" value="F:urocanate hydratase activity"/>
    <property type="evidence" value="ECO:0007669"/>
    <property type="project" value="UniProtKB-UniRule"/>
</dbReference>
<dbReference type="GO" id="GO:0019556">
    <property type="term" value="P:L-histidine catabolic process to glutamate and formamide"/>
    <property type="evidence" value="ECO:0007669"/>
    <property type="project" value="UniProtKB-UniPathway"/>
</dbReference>
<dbReference type="GO" id="GO:0019557">
    <property type="term" value="P:L-histidine catabolic process to glutamate and formate"/>
    <property type="evidence" value="ECO:0007669"/>
    <property type="project" value="UniProtKB-UniPathway"/>
</dbReference>
<dbReference type="FunFam" id="3.40.50.10730:FF:000001">
    <property type="entry name" value="Urocanate hydratase"/>
    <property type="match status" value="1"/>
</dbReference>
<dbReference type="Gene3D" id="3.40.50.10730">
    <property type="entry name" value="Urocanase like domains"/>
    <property type="match status" value="1"/>
</dbReference>
<dbReference type="Gene3D" id="3.40.1770.10">
    <property type="entry name" value="Urocanase superfamily"/>
    <property type="match status" value="1"/>
</dbReference>
<dbReference type="HAMAP" id="MF_00577">
    <property type="entry name" value="HutU"/>
    <property type="match status" value="1"/>
</dbReference>
<dbReference type="InterPro" id="IPR055351">
    <property type="entry name" value="Urocanase"/>
</dbReference>
<dbReference type="InterPro" id="IPR023637">
    <property type="entry name" value="Urocanase-like"/>
</dbReference>
<dbReference type="InterPro" id="IPR035401">
    <property type="entry name" value="Urocanase_C"/>
</dbReference>
<dbReference type="InterPro" id="IPR038364">
    <property type="entry name" value="Urocanase_central_sf"/>
</dbReference>
<dbReference type="InterPro" id="IPR023636">
    <property type="entry name" value="Urocanase_CS"/>
</dbReference>
<dbReference type="InterPro" id="IPR035400">
    <property type="entry name" value="Urocanase_N"/>
</dbReference>
<dbReference type="InterPro" id="IPR035085">
    <property type="entry name" value="Urocanase_Rossmann-like"/>
</dbReference>
<dbReference type="InterPro" id="IPR036190">
    <property type="entry name" value="Urocanase_sf"/>
</dbReference>
<dbReference type="NCBIfam" id="TIGR01228">
    <property type="entry name" value="hutU"/>
    <property type="match status" value="1"/>
</dbReference>
<dbReference type="NCBIfam" id="NF003820">
    <property type="entry name" value="PRK05414.1"/>
    <property type="match status" value="1"/>
</dbReference>
<dbReference type="PANTHER" id="PTHR12216">
    <property type="entry name" value="UROCANATE HYDRATASE"/>
    <property type="match status" value="1"/>
</dbReference>
<dbReference type="PANTHER" id="PTHR12216:SF4">
    <property type="entry name" value="UROCANATE HYDRATASE"/>
    <property type="match status" value="1"/>
</dbReference>
<dbReference type="Pfam" id="PF01175">
    <property type="entry name" value="Urocanase"/>
    <property type="match status" value="1"/>
</dbReference>
<dbReference type="Pfam" id="PF17392">
    <property type="entry name" value="Urocanase_C"/>
    <property type="match status" value="1"/>
</dbReference>
<dbReference type="Pfam" id="PF17391">
    <property type="entry name" value="Urocanase_N"/>
    <property type="match status" value="1"/>
</dbReference>
<dbReference type="PIRSF" id="PIRSF001423">
    <property type="entry name" value="Urocanate_hydrat"/>
    <property type="match status" value="1"/>
</dbReference>
<dbReference type="SUPFAM" id="SSF111326">
    <property type="entry name" value="Urocanase"/>
    <property type="match status" value="1"/>
</dbReference>
<dbReference type="PROSITE" id="PS01233">
    <property type="entry name" value="UROCANASE"/>
    <property type="match status" value="1"/>
</dbReference>
<gene>
    <name evidence="1" type="primary">hutU</name>
    <name type="ordered locus">BCAH820_3661</name>
</gene>
<organism>
    <name type="scientific">Bacillus cereus (strain AH820)</name>
    <dbReference type="NCBI Taxonomy" id="405535"/>
    <lineage>
        <taxon>Bacteria</taxon>
        <taxon>Bacillati</taxon>
        <taxon>Bacillota</taxon>
        <taxon>Bacilli</taxon>
        <taxon>Bacillales</taxon>
        <taxon>Bacillaceae</taxon>
        <taxon>Bacillus</taxon>
        <taxon>Bacillus cereus group</taxon>
    </lineage>
</organism>
<reference key="1">
    <citation type="submission" date="2008-10" db="EMBL/GenBank/DDBJ databases">
        <title>Genome sequence of Bacillus cereus AH820.</title>
        <authorList>
            <person name="Dodson R.J."/>
            <person name="Durkin A.S."/>
            <person name="Rosovitz M.J."/>
            <person name="Rasko D.A."/>
            <person name="Hoffmaster A."/>
            <person name="Ravel J."/>
            <person name="Sutton G."/>
        </authorList>
    </citation>
    <scope>NUCLEOTIDE SEQUENCE [LARGE SCALE GENOMIC DNA]</scope>
    <source>
        <strain>AH820</strain>
    </source>
</reference>
<comment type="function">
    <text evidence="1">Catalyzes the conversion of urocanate to 4-imidazolone-5-propionate.</text>
</comment>
<comment type="catalytic activity">
    <reaction evidence="1">
        <text>4-imidazolone-5-propanoate = trans-urocanate + H2O</text>
        <dbReference type="Rhea" id="RHEA:13101"/>
        <dbReference type="ChEBI" id="CHEBI:15377"/>
        <dbReference type="ChEBI" id="CHEBI:17771"/>
        <dbReference type="ChEBI" id="CHEBI:77893"/>
        <dbReference type="EC" id="4.2.1.49"/>
    </reaction>
</comment>
<comment type="cofactor">
    <cofactor evidence="1">
        <name>NAD(+)</name>
        <dbReference type="ChEBI" id="CHEBI:57540"/>
    </cofactor>
    <text evidence="1">Binds 1 NAD(+) per subunit.</text>
</comment>
<comment type="pathway">
    <text evidence="1">Amino-acid degradation; L-histidine degradation into L-glutamate; N-formimidoyl-L-glutamate from L-histidine: step 2/3.</text>
</comment>
<comment type="subcellular location">
    <subcellularLocation>
        <location evidence="1">Cytoplasm</location>
    </subcellularLocation>
</comment>
<comment type="similarity">
    <text evidence="1">Belongs to the urocanase family.</text>
</comment>
<sequence>MEKVKQTIRAPRGTELQTKGWVQEAALRMLMNNLDPEVAEKPEELVVYGGIGRAARNWESYQAIVDSLKTLESDETLLVQSGKPVAIFKSHEDAPRVLLANSNLVPKWANWDHFRELEKKGLMMYGQMTAGSWIYIGTQGILQGTYETFGEAARQHFGGSLKGTLTLTAGLGGMGGAQPLAVTMNGGVVIAIDVDKRSIDRRIEKRYCDMYTESLEEALAVANEYKEKKEPISIGLLGNAAEILPELVKRNITPDLVTDQTSAHDPLNGYIPVGYTLEEAAKLREEDPERYVQLSKESMTKHVEAMLAMQEKGAITFDYGNNIRQVAFDEGLKNAFDFPGFVPAFIRPLFCEGKGPFRWVALSGDPEDIYKTDEVILREFADNEHLCNWIRMARQQVEFQGLPSRICWLGYGERAKFGRIINEMVANGELSAPIVIGRDHLDCGSVASPNRETEAMKDGSDAVADWPILNALINSVNGASWVSVHHGGGVGMGYSLHAGMVIVADGTEAAAKRIERVLTSDPGMGVVRHVDAGYDLAVETAKEKGVNIPMMK</sequence>